<reference key="1">
    <citation type="journal article" date="2002" name="J. Neurooncol.">
        <title>Molecular cloning of the rat IL-13 alpha 2 receptor cDNA and its expression in rat tissues.</title>
        <authorList>
            <person name="Wu A.H."/>
            <person name="Low W.C."/>
        </authorList>
    </citation>
    <scope>NUCLEOTIDE SEQUENCE [MRNA]</scope>
    <source>
        <strain>Sprague-Dawley</strain>
    </source>
</reference>
<accession>Q8VHK6</accession>
<keyword id="KW-1003">Cell membrane</keyword>
<keyword id="KW-1015">Disulfide bond</keyword>
<keyword id="KW-0325">Glycoprotein</keyword>
<keyword id="KW-0472">Membrane</keyword>
<keyword id="KW-0675">Receptor</keyword>
<keyword id="KW-1185">Reference proteome</keyword>
<keyword id="KW-0677">Repeat</keyword>
<keyword id="KW-0732">Signal</keyword>
<keyword id="KW-0812">Transmembrane</keyword>
<keyword id="KW-1133">Transmembrane helix</keyword>
<evidence type="ECO:0000250" key="1"/>
<evidence type="ECO:0000250" key="2">
    <source>
        <dbReference type="UniProtKB" id="Q14627"/>
    </source>
</evidence>
<evidence type="ECO:0000255" key="3"/>
<evidence type="ECO:0000255" key="4">
    <source>
        <dbReference type="PROSITE-ProRule" id="PRU00316"/>
    </source>
</evidence>
<evidence type="ECO:0000305" key="5"/>
<proteinExistence type="evidence at transcript level"/>
<name>I13R2_RAT</name>
<comment type="function">
    <text evidence="2">Cell surface receptor that plays a role in the regulation of IL-13-mediated responses. Functions as a decoy receptor that inhibits IL-13- and IL-4-mediated signal transduction via the JAK-STAT pathway and thereby modulates immune responses and inflammation. Serves as a functional signaling receptor for IL-13 in an alternative pathway involving AP-1 ultimately leading to the production of TGFB1.</text>
</comment>
<comment type="subunit">
    <text evidence="2">Interacts with IL4RA. Interacts with high affinity to interleukin-13 (IL13), but not to interleukin-4 (IL4).</text>
</comment>
<comment type="subcellular location">
    <subcellularLocation>
        <location evidence="2">Cell membrane</location>
        <topology evidence="2">Single-pass type I membrane protein</topology>
    </subcellularLocation>
</comment>
<comment type="domain">
    <text evidence="2">The WSXWS motif appears to be necessary for proper protein folding and thereby efficient intracellular transport and cell-surface receptor binding. The cytoplasmic domain functions as an inhibitor of IL-4 or IL-13-dependent activation of the Jak-Stat pathway.</text>
</comment>
<comment type="PTM">
    <text evidence="2">Cleaved by MMP8 leading to a soluble form that is also able to interact with IL13.</text>
</comment>
<comment type="similarity">
    <text evidence="5">Belongs to the type I cytokine receptor family. Type 5 subfamily.</text>
</comment>
<feature type="signal peptide" evidence="3">
    <location>
        <begin position="1"/>
        <end position="23"/>
    </location>
</feature>
<feature type="chain" id="PRO_0000378453" description="Interleukin-13 receptor subunit alpha-2">
    <location>
        <begin position="24"/>
        <end position="385"/>
    </location>
</feature>
<feature type="topological domain" description="Extracellular" evidence="3">
    <location>
        <begin position="24"/>
        <end position="336"/>
    </location>
</feature>
<feature type="transmembrane region" description="Helical" evidence="3">
    <location>
        <begin position="337"/>
        <end position="357"/>
    </location>
</feature>
<feature type="topological domain" description="Cytoplasmic" evidence="3">
    <location>
        <begin position="358"/>
        <end position="385"/>
    </location>
</feature>
<feature type="domain" description="Fibronectin type-III 1" evidence="4">
    <location>
        <begin position="30"/>
        <end position="130"/>
    </location>
</feature>
<feature type="domain" description="Fibronectin type-III 2" evidence="4">
    <location>
        <begin position="133"/>
        <end position="221"/>
    </location>
</feature>
<feature type="domain" description="Fibronectin type-III 3" evidence="4">
    <location>
        <begin position="236"/>
        <end position="334"/>
    </location>
</feature>
<feature type="short sequence motif" description="WSXWS motif">
    <location>
        <begin position="318"/>
        <end position="322"/>
    </location>
</feature>
<feature type="glycosylation site" description="N-linked (GlcNAc...) asparagine" evidence="3">
    <location>
        <position position="111"/>
    </location>
</feature>
<feature type="glycosylation site" description="N-linked (GlcNAc...) asparagine" evidence="3">
    <location>
        <position position="164"/>
    </location>
</feature>
<feature type="glycosylation site" description="N-linked (GlcNAc...) asparagine" evidence="3">
    <location>
        <position position="211"/>
    </location>
</feature>
<feature type="glycosylation site" description="N-linked (GlcNAc...) asparagine" evidence="3">
    <location>
        <position position="295"/>
    </location>
</feature>
<feature type="disulfide bond" evidence="1">
    <location>
        <begin position="61"/>
        <end position="109"/>
    </location>
</feature>
<feature type="disulfide bond" evidence="1">
    <location>
        <begin position="141"/>
        <end position="151"/>
    </location>
</feature>
<feature type="disulfide bond" evidence="1">
    <location>
        <begin position="180"/>
        <end position="193"/>
    </location>
</feature>
<feature type="disulfide bond" evidence="1">
    <location>
        <begin position="265"/>
        <end position="312"/>
    </location>
</feature>
<organism>
    <name type="scientific">Rattus norvegicus</name>
    <name type="common">Rat</name>
    <dbReference type="NCBI Taxonomy" id="10116"/>
    <lineage>
        <taxon>Eukaryota</taxon>
        <taxon>Metazoa</taxon>
        <taxon>Chordata</taxon>
        <taxon>Craniata</taxon>
        <taxon>Vertebrata</taxon>
        <taxon>Euteleostomi</taxon>
        <taxon>Mammalia</taxon>
        <taxon>Eutheria</taxon>
        <taxon>Euarchontoglires</taxon>
        <taxon>Glires</taxon>
        <taxon>Rodentia</taxon>
        <taxon>Myomorpha</taxon>
        <taxon>Muroidea</taxon>
        <taxon>Muridae</taxon>
        <taxon>Murinae</taxon>
        <taxon>Rattus</taxon>
    </lineage>
</organism>
<protein>
    <recommendedName>
        <fullName>Interleukin-13 receptor subunit alpha-2</fullName>
        <shortName>IL-13 receptor subunit alpha-2</shortName>
        <shortName>IL-13R subunit alpha-2</shortName>
        <shortName>IL-13R-alpha-2</shortName>
        <shortName>IL-13RA2</shortName>
    </recommendedName>
    <cdAntigenName>CD213a2</cdAntigenName>
</protein>
<gene>
    <name type="primary">Il13ra2</name>
</gene>
<dbReference type="EMBL" id="AF448818">
    <property type="protein sequence ID" value="AAL57513.1"/>
    <property type="molecule type" value="mRNA"/>
</dbReference>
<dbReference type="SMR" id="Q8VHK6"/>
<dbReference type="FunCoup" id="Q8VHK6">
    <property type="interactions" value="31"/>
</dbReference>
<dbReference type="STRING" id="10116.ENSRNOP00000069280"/>
<dbReference type="GlyCosmos" id="Q8VHK6">
    <property type="glycosylation" value="4 sites, No reported glycans"/>
</dbReference>
<dbReference type="GlyGen" id="Q8VHK6">
    <property type="glycosylation" value="4 sites"/>
</dbReference>
<dbReference type="PaxDb" id="10116-ENSRNOP00000041564"/>
<dbReference type="AGR" id="RGD:620838"/>
<dbReference type="RGD" id="620838">
    <property type="gene designation" value="Il13ra2"/>
</dbReference>
<dbReference type="eggNOG" id="ENOG502RV4W">
    <property type="taxonomic scope" value="Eukaryota"/>
</dbReference>
<dbReference type="InParanoid" id="Q8VHK6"/>
<dbReference type="PhylomeDB" id="Q8VHK6"/>
<dbReference type="Reactome" id="R-RNO-6785807">
    <property type="pathway name" value="Interleukin-4 and Interleukin-13 signaling"/>
</dbReference>
<dbReference type="PRO" id="PR:Q8VHK6"/>
<dbReference type="Proteomes" id="UP000002494">
    <property type="component" value="Unplaced"/>
</dbReference>
<dbReference type="GO" id="GO:0009897">
    <property type="term" value="C:external side of plasma membrane"/>
    <property type="evidence" value="ECO:0000318"/>
    <property type="project" value="GO_Central"/>
</dbReference>
<dbReference type="GO" id="GO:0005886">
    <property type="term" value="C:plasma membrane"/>
    <property type="evidence" value="ECO:0000266"/>
    <property type="project" value="RGD"/>
</dbReference>
<dbReference type="GO" id="GO:0043235">
    <property type="term" value="C:receptor complex"/>
    <property type="evidence" value="ECO:0000318"/>
    <property type="project" value="GO_Central"/>
</dbReference>
<dbReference type="GO" id="GO:0019955">
    <property type="term" value="F:cytokine binding"/>
    <property type="evidence" value="ECO:0000318"/>
    <property type="project" value="GO_Central"/>
</dbReference>
<dbReference type="GO" id="GO:0004896">
    <property type="term" value="F:cytokine receptor activity"/>
    <property type="evidence" value="ECO:0000266"/>
    <property type="project" value="RGD"/>
</dbReference>
<dbReference type="GO" id="GO:0071260">
    <property type="term" value="P:cellular response to mechanical stimulus"/>
    <property type="evidence" value="ECO:0000270"/>
    <property type="project" value="RGD"/>
</dbReference>
<dbReference type="GO" id="GO:0019221">
    <property type="term" value="P:cytokine-mediated signaling pathway"/>
    <property type="evidence" value="ECO:0000318"/>
    <property type="project" value="GO_Central"/>
</dbReference>
<dbReference type="GO" id="GO:0016064">
    <property type="term" value="P:immunoglobulin mediated immune response"/>
    <property type="evidence" value="ECO:0000266"/>
    <property type="project" value="RGD"/>
</dbReference>
<dbReference type="GO" id="GO:0035772">
    <property type="term" value="P:interleukin-13-mediated signaling pathway"/>
    <property type="evidence" value="ECO:0000266"/>
    <property type="project" value="RGD"/>
</dbReference>
<dbReference type="GO" id="GO:0002638">
    <property type="term" value="P:negative regulation of immunoglobulin production"/>
    <property type="evidence" value="ECO:0000266"/>
    <property type="project" value="RGD"/>
</dbReference>
<dbReference type="GO" id="GO:0043305">
    <property type="term" value="P:negative regulation of mast cell degranulation"/>
    <property type="evidence" value="ECO:0000266"/>
    <property type="project" value="RGD"/>
</dbReference>
<dbReference type="GO" id="GO:0008284">
    <property type="term" value="P:positive regulation of cell population proliferation"/>
    <property type="evidence" value="ECO:0000318"/>
    <property type="project" value="GO_Central"/>
</dbReference>
<dbReference type="FunFam" id="2.60.40.10:FF:001186">
    <property type="entry name" value="Interleukin 13 receptor subunit alpha 2"/>
    <property type="match status" value="1"/>
</dbReference>
<dbReference type="FunFam" id="2.60.40.10:FF:001396">
    <property type="entry name" value="Interleukin 13 receptor subunit alpha 2"/>
    <property type="match status" value="1"/>
</dbReference>
<dbReference type="FunFam" id="2.60.40.10:FF:000958">
    <property type="entry name" value="Interleukin-13 receptor subunit alpha-2"/>
    <property type="match status" value="1"/>
</dbReference>
<dbReference type="Gene3D" id="2.60.40.10">
    <property type="entry name" value="Immunoglobulins"/>
    <property type="match status" value="3"/>
</dbReference>
<dbReference type="InterPro" id="IPR003961">
    <property type="entry name" value="FN3_dom"/>
</dbReference>
<dbReference type="InterPro" id="IPR036116">
    <property type="entry name" value="FN3_sf"/>
</dbReference>
<dbReference type="InterPro" id="IPR013783">
    <property type="entry name" value="Ig-like_fold"/>
</dbReference>
<dbReference type="InterPro" id="IPR003532">
    <property type="entry name" value="Short_hematopoietin_rcpt_2_CS"/>
</dbReference>
<dbReference type="InterPro" id="IPR015321">
    <property type="entry name" value="TypeI_recpt_CBD"/>
</dbReference>
<dbReference type="PANTHER" id="PTHR23037">
    <property type="entry name" value="CYTOKINE RECEPTOR"/>
    <property type="match status" value="1"/>
</dbReference>
<dbReference type="PANTHER" id="PTHR23037:SF45">
    <property type="entry name" value="INTERLEUKIN 13 RECEPTOR SUBUNIT ALPHA 2"/>
    <property type="match status" value="1"/>
</dbReference>
<dbReference type="Pfam" id="PF09240">
    <property type="entry name" value="IL6Ra-bind"/>
    <property type="match status" value="1"/>
</dbReference>
<dbReference type="SUPFAM" id="SSF49265">
    <property type="entry name" value="Fibronectin type III"/>
    <property type="match status" value="3"/>
</dbReference>
<dbReference type="PROSITE" id="PS50853">
    <property type="entry name" value="FN3"/>
    <property type="match status" value="2"/>
</dbReference>
<dbReference type="PROSITE" id="PS01356">
    <property type="entry name" value="HEMATOPO_REC_S_F2"/>
    <property type="match status" value="1"/>
</dbReference>
<sequence>MALMAVNTRCLCLFLLCTITGHSLEIKVNPPQDFEILDPGLLGYLYLQWKPPVVMDNFKECKLEYELKYRNVDSDSWKTIITRNLIYKDGFDLNKGIEGKIRTHLSEHCTNGSEVQSPWTEASYGIADEGSLGTKIQDMKCIYYNWQYLVCSWKPGKTVHSDTNYTMFFWYEGLDHALQCADYLQDNEKNVGCKLSNLDSSDYKDFFIRVNGSSKLEPIRSSYMVFQLQNIVKPLPPEFLHISVENSIDIRMKWSTPGGPIPPSCYTYEIVVREDDISWESATDKNDMKLKRRANESEDLCFFVRCKINIYCADDGIWSEWSEEECWEGYTGPDSKIVFIVPVCLFFIFLLLLLCLIVEKEDPEPTLSLHVDLNKEMYAYEETLC</sequence>